<protein>
    <recommendedName>
        <fullName evidence="1">Autonomous glycyl radical cofactor</fullName>
    </recommendedName>
</protein>
<evidence type="ECO:0000255" key="1">
    <source>
        <dbReference type="HAMAP-Rule" id="MF_00806"/>
    </source>
</evidence>
<gene>
    <name evidence="1" type="primary">grcA</name>
    <name type="ordered locus">PM0064</name>
</gene>
<sequence>MIKGIQITQAANDNLLNSFWLLDSEKGEARCLCAKGDFVEDQIVAVSELGQIEYRELPVDIAPTVKVEGGQHLNVNVLRRETLEDAVNNPEKYPQLTIRVSGYAVRFNSLTPEQQRDVITRTFTQSL</sequence>
<organism>
    <name type="scientific">Pasteurella multocida (strain Pm70)</name>
    <dbReference type="NCBI Taxonomy" id="272843"/>
    <lineage>
        <taxon>Bacteria</taxon>
        <taxon>Pseudomonadati</taxon>
        <taxon>Pseudomonadota</taxon>
        <taxon>Gammaproteobacteria</taxon>
        <taxon>Pasteurellales</taxon>
        <taxon>Pasteurellaceae</taxon>
        <taxon>Pasteurella</taxon>
    </lineage>
</organism>
<keyword id="KW-0556">Organic radical</keyword>
<keyword id="KW-1185">Reference proteome</keyword>
<feature type="chain" id="PRO_0000166704" description="Autonomous glycyl radical cofactor">
    <location>
        <begin position="1"/>
        <end position="127"/>
    </location>
</feature>
<feature type="domain" description="Glycine radical" evidence="1">
    <location>
        <begin position="5"/>
        <end position="127"/>
    </location>
</feature>
<feature type="modified residue" description="Glycine radical" evidence="1">
    <location>
        <position position="102"/>
    </location>
</feature>
<accession>Q9CPH6</accession>
<dbReference type="EMBL" id="AE004439">
    <property type="protein sequence ID" value="AAK02148.1"/>
    <property type="molecule type" value="Genomic_DNA"/>
</dbReference>
<dbReference type="RefSeq" id="WP_005718923.1">
    <property type="nucleotide sequence ID" value="NC_002663.1"/>
</dbReference>
<dbReference type="SMR" id="Q9CPH6"/>
<dbReference type="STRING" id="272843.PM0064"/>
<dbReference type="EnsemblBacteria" id="AAK02148">
    <property type="protein sequence ID" value="AAK02148"/>
    <property type="gene ID" value="PM0064"/>
</dbReference>
<dbReference type="GeneID" id="77207403"/>
<dbReference type="KEGG" id="pmu:PM0064"/>
<dbReference type="HOGENOM" id="CLU_133780_0_0_6"/>
<dbReference type="OrthoDB" id="9803969at2"/>
<dbReference type="Proteomes" id="UP000000809">
    <property type="component" value="Chromosome"/>
</dbReference>
<dbReference type="GO" id="GO:0005829">
    <property type="term" value="C:cytosol"/>
    <property type="evidence" value="ECO:0007669"/>
    <property type="project" value="TreeGrafter"/>
</dbReference>
<dbReference type="GO" id="GO:0008861">
    <property type="term" value="F:formate C-acetyltransferase activity"/>
    <property type="evidence" value="ECO:0007669"/>
    <property type="project" value="TreeGrafter"/>
</dbReference>
<dbReference type="FunFam" id="3.20.70.20:FF:000002">
    <property type="entry name" value="Autonomous glycyl radical cofactor"/>
    <property type="match status" value="1"/>
</dbReference>
<dbReference type="Gene3D" id="3.20.70.20">
    <property type="match status" value="1"/>
</dbReference>
<dbReference type="HAMAP" id="MF_00806">
    <property type="entry name" value="GrcA"/>
    <property type="match status" value="1"/>
</dbReference>
<dbReference type="InterPro" id="IPR050244">
    <property type="entry name" value="Auton_GlycylRad_Cofactor"/>
</dbReference>
<dbReference type="InterPro" id="IPR019777">
    <property type="entry name" value="Form_AcTrfase_GR_CS"/>
</dbReference>
<dbReference type="InterPro" id="IPR001150">
    <property type="entry name" value="Gly_radical"/>
</dbReference>
<dbReference type="InterPro" id="IPR011140">
    <property type="entry name" value="Glycyl_radical_cofactor_GrcA"/>
</dbReference>
<dbReference type="NCBIfam" id="TIGR04365">
    <property type="entry name" value="spare_glycyl"/>
    <property type="match status" value="1"/>
</dbReference>
<dbReference type="PANTHER" id="PTHR30191">
    <property type="entry name" value="FORMATE ACETYLTRANSFERASE"/>
    <property type="match status" value="1"/>
</dbReference>
<dbReference type="PANTHER" id="PTHR30191:SF0">
    <property type="entry name" value="FORMATE ACETYLTRANSFERASE 1"/>
    <property type="match status" value="1"/>
</dbReference>
<dbReference type="Pfam" id="PF01228">
    <property type="entry name" value="Gly_radical"/>
    <property type="match status" value="1"/>
</dbReference>
<dbReference type="PIRSF" id="PIRSF000378">
    <property type="entry name" value="Gly_radicl_yfiD"/>
    <property type="match status" value="1"/>
</dbReference>
<dbReference type="SUPFAM" id="SSF51998">
    <property type="entry name" value="PFL-like glycyl radical enzymes"/>
    <property type="match status" value="1"/>
</dbReference>
<dbReference type="PROSITE" id="PS00850">
    <property type="entry name" value="GLY_RADICAL_1"/>
    <property type="match status" value="1"/>
</dbReference>
<dbReference type="PROSITE" id="PS51149">
    <property type="entry name" value="GLY_RADICAL_2"/>
    <property type="match status" value="1"/>
</dbReference>
<name>GRCA_PASMU</name>
<comment type="function">
    <text evidence="1">Acts as a radical domain for damaged PFL and possibly other radical proteins.</text>
</comment>
<reference key="1">
    <citation type="journal article" date="2001" name="Proc. Natl. Acad. Sci. U.S.A.">
        <title>Complete genomic sequence of Pasteurella multocida Pm70.</title>
        <authorList>
            <person name="May B.J."/>
            <person name="Zhang Q."/>
            <person name="Li L.L."/>
            <person name="Paustian M.L."/>
            <person name="Whittam T.S."/>
            <person name="Kapur V."/>
        </authorList>
    </citation>
    <scope>NUCLEOTIDE SEQUENCE [LARGE SCALE GENOMIC DNA]</scope>
    <source>
        <strain>Pm70</strain>
    </source>
</reference>
<proteinExistence type="inferred from homology"/>